<dbReference type="EMBL" id="BA000039">
    <property type="protein sequence ID" value="BAC07661.1"/>
    <property type="molecule type" value="Genomic_DNA"/>
</dbReference>
<dbReference type="RefSeq" id="NP_680899.1">
    <property type="nucleotide sequence ID" value="NC_004113.1"/>
</dbReference>
<dbReference type="RefSeq" id="WP_011055963.1">
    <property type="nucleotide sequence ID" value="NC_004113.1"/>
</dbReference>
<dbReference type="SMR" id="Q8DMK8"/>
<dbReference type="STRING" id="197221.gene:10746686"/>
<dbReference type="EnsemblBacteria" id="BAC07661">
    <property type="protein sequence ID" value="BAC07661"/>
    <property type="gene ID" value="BAC07661"/>
</dbReference>
<dbReference type="KEGG" id="tel:tlr0108"/>
<dbReference type="PATRIC" id="fig|197221.4.peg.111"/>
<dbReference type="eggNOG" id="COG0102">
    <property type="taxonomic scope" value="Bacteria"/>
</dbReference>
<dbReference type="Proteomes" id="UP000000440">
    <property type="component" value="Chromosome"/>
</dbReference>
<dbReference type="GO" id="GO:0022625">
    <property type="term" value="C:cytosolic large ribosomal subunit"/>
    <property type="evidence" value="ECO:0007669"/>
    <property type="project" value="TreeGrafter"/>
</dbReference>
<dbReference type="GO" id="GO:0003729">
    <property type="term" value="F:mRNA binding"/>
    <property type="evidence" value="ECO:0007669"/>
    <property type="project" value="TreeGrafter"/>
</dbReference>
<dbReference type="GO" id="GO:0003735">
    <property type="term" value="F:structural constituent of ribosome"/>
    <property type="evidence" value="ECO:0007669"/>
    <property type="project" value="InterPro"/>
</dbReference>
<dbReference type="GO" id="GO:0017148">
    <property type="term" value="P:negative regulation of translation"/>
    <property type="evidence" value="ECO:0007669"/>
    <property type="project" value="TreeGrafter"/>
</dbReference>
<dbReference type="GO" id="GO:0006412">
    <property type="term" value="P:translation"/>
    <property type="evidence" value="ECO:0007669"/>
    <property type="project" value="UniProtKB-UniRule"/>
</dbReference>
<dbReference type="CDD" id="cd00392">
    <property type="entry name" value="Ribosomal_L13"/>
    <property type="match status" value="1"/>
</dbReference>
<dbReference type="FunFam" id="3.90.1180.10:FF:000001">
    <property type="entry name" value="50S ribosomal protein L13"/>
    <property type="match status" value="1"/>
</dbReference>
<dbReference type="Gene3D" id="3.90.1180.10">
    <property type="entry name" value="Ribosomal protein L13"/>
    <property type="match status" value="1"/>
</dbReference>
<dbReference type="HAMAP" id="MF_01366">
    <property type="entry name" value="Ribosomal_uL13"/>
    <property type="match status" value="1"/>
</dbReference>
<dbReference type="InterPro" id="IPR005822">
    <property type="entry name" value="Ribosomal_uL13"/>
</dbReference>
<dbReference type="InterPro" id="IPR005823">
    <property type="entry name" value="Ribosomal_uL13_bac-type"/>
</dbReference>
<dbReference type="InterPro" id="IPR023563">
    <property type="entry name" value="Ribosomal_uL13_CS"/>
</dbReference>
<dbReference type="InterPro" id="IPR036899">
    <property type="entry name" value="Ribosomal_uL13_sf"/>
</dbReference>
<dbReference type="NCBIfam" id="TIGR01066">
    <property type="entry name" value="rplM_bact"/>
    <property type="match status" value="1"/>
</dbReference>
<dbReference type="PANTHER" id="PTHR11545:SF2">
    <property type="entry name" value="LARGE RIBOSOMAL SUBUNIT PROTEIN UL13M"/>
    <property type="match status" value="1"/>
</dbReference>
<dbReference type="PANTHER" id="PTHR11545">
    <property type="entry name" value="RIBOSOMAL PROTEIN L13"/>
    <property type="match status" value="1"/>
</dbReference>
<dbReference type="Pfam" id="PF00572">
    <property type="entry name" value="Ribosomal_L13"/>
    <property type="match status" value="1"/>
</dbReference>
<dbReference type="PIRSF" id="PIRSF002181">
    <property type="entry name" value="Ribosomal_L13"/>
    <property type="match status" value="1"/>
</dbReference>
<dbReference type="SUPFAM" id="SSF52161">
    <property type="entry name" value="Ribosomal protein L13"/>
    <property type="match status" value="1"/>
</dbReference>
<dbReference type="PROSITE" id="PS00783">
    <property type="entry name" value="RIBOSOMAL_L13"/>
    <property type="match status" value="1"/>
</dbReference>
<organism>
    <name type="scientific">Thermosynechococcus vestitus (strain NIES-2133 / IAM M-273 / BP-1)</name>
    <dbReference type="NCBI Taxonomy" id="197221"/>
    <lineage>
        <taxon>Bacteria</taxon>
        <taxon>Bacillati</taxon>
        <taxon>Cyanobacteriota</taxon>
        <taxon>Cyanophyceae</taxon>
        <taxon>Acaryochloridales</taxon>
        <taxon>Thermosynechococcaceae</taxon>
        <taxon>Thermosynechococcus</taxon>
    </lineage>
</organism>
<comment type="function">
    <text evidence="1">This protein is one of the early assembly proteins of the 50S ribosomal subunit, although it is not seen to bind rRNA by itself. It is important during the early stages of 50S assembly.</text>
</comment>
<comment type="subunit">
    <text evidence="1">Part of the 50S ribosomal subunit.</text>
</comment>
<comment type="similarity">
    <text evidence="1">Belongs to the universal ribosomal protein uL13 family.</text>
</comment>
<feature type="chain" id="PRO_0000261806" description="Large ribosomal subunit protein uL13">
    <location>
        <begin position="1"/>
        <end position="152"/>
    </location>
</feature>
<feature type="region of interest" description="Disordered" evidence="2">
    <location>
        <begin position="133"/>
        <end position="152"/>
    </location>
</feature>
<feature type="compositionally biased region" description="Polar residues" evidence="2">
    <location>
        <begin position="139"/>
        <end position="152"/>
    </location>
</feature>
<name>RL13_THEVB</name>
<sequence>MTSTVKTPLPAVDDLAPQWYVIDAADQRLGRLAAEIARILRGKNKAIYTPHMDTGDFVIVINAEKVTVTGKKRSQKLYRRHSGRPGGMKIETFDQLQARIPERIIEHAVKGMLPKNSLGRKLFTKLKVYAGPEHPHQAQKPQPLTINTIPGA</sequence>
<keyword id="KW-1185">Reference proteome</keyword>
<keyword id="KW-0687">Ribonucleoprotein</keyword>
<keyword id="KW-0689">Ribosomal protein</keyword>
<evidence type="ECO:0000255" key="1">
    <source>
        <dbReference type="HAMAP-Rule" id="MF_01366"/>
    </source>
</evidence>
<evidence type="ECO:0000256" key="2">
    <source>
        <dbReference type="SAM" id="MobiDB-lite"/>
    </source>
</evidence>
<evidence type="ECO:0000305" key="3"/>
<proteinExistence type="inferred from homology"/>
<gene>
    <name evidence="1" type="primary">rplM</name>
    <name evidence="1" type="synonym">rpl13</name>
    <name type="ordered locus">tlr0108</name>
</gene>
<accession>Q8DMK8</accession>
<reference key="1">
    <citation type="journal article" date="2002" name="DNA Res.">
        <title>Complete genome structure of the thermophilic cyanobacterium Thermosynechococcus elongatus BP-1.</title>
        <authorList>
            <person name="Nakamura Y."/>
            <person name="Kaneko T."/>
            <person name="Sato S."/>
            <person name="Ikeuchi M."/>
            <person name="Katoh H."/>
            <person name="Sasamoto S."/>
            <person name="Watanabe A."/>
            <person name="Iriguchi M."/>
            <person name="Kawashima K."/>
            <person name="Kimura T."/>
            <person name="Kishida Y."/>
            <person name="Kiyokawa C."/>
            <person name="Kohara M."/>
            <person name="Matsumoto M."/>
            <person name="Matsuno A."/>
            <person name="Nakazaki N."/>
            <person name="Shimpo S."/>
            <person name="Sugimoto M."/>
            <person name="Takeuchi C."/>
            <person name="Yamada M."/>
            <person name="Tabata S."/>
        </authorList>
    </citation>
    <scope>NUCLEOTIDE SEQUENCE [LARGE SCALE GENOMIC DNA]</scope>
    <source>
        <strain>NIES-2133 / IAM M-273 / BP-1</strain>
    </source>
</reference>
<protein>
    <recommendedName>
        <fullName evidence="1">Large ribosomal subunit protein uL13</fullName>
    </recommendedName>
    <alternativeName>
        <fullName evidence="3">50S ribosomal protein L13</fullName>
    </alternativeName>
</protein>